<keyword id="KW-0044">Antibiotic</keyword>
<keyword id="KW-0929">Antimicrobial</keyword>
<keyword id="KW-0903">Direct protein sequencing</keyword>
<keyword id="KW-1015">Disulfide bond</keyword>
<keyword id="KW-0391">Immunity</keyword>
<keyword id="KW-0399">Innate immunity</keyword>
<keyword id="KW-0964">Secreted</keyword>
<proteinExistence type="evidence at protein level"/>
<organism evidence="2">
    <name type="scientific">Nidirana okinavana</name>
    <name type="common">Kampira Falls frog</name>
    <name type="synonym">Babina okinavana</name>
    <dbReference type="NCBI Taxonomy" id="156870"/>
    <lineage>
        <taxon>Eukaryota</taxon>
        <taxon>Metazoa</taxon>
        <taxon>Chordata</taxon>
        <taxon>Craniata</taxon>
        <taxon>Vertebrata</taxon>
        <taxon>Euteleostomi</taxon>
        <taxon>Amphibia</taxon>
        <taxon>Batrachia</taxon>
        <taxon>Anura</taxon>
        <taxon>Neobatrachia</taxon>
        <taxon>Ranoidea</taxon>
        <taxon>Ranidae</taxon>
        <taxon>Nidirana</taxon>
    </lineage>
</organism>
<reference evidence="3" key="1">
    <citation type="journal article" date="2005" name="Peptides">
        <title>A family of acyclic brevinin-1 peptides from the skin of the Ryukyu brown frog Rana okinavana.</title>
        <authorList>
            <person name="Conlon J.M."/>
            <person name="Sonnevend A."/>
            <person name="Jouenne T."/>
            <person name="Coquet L."/>
            <person name="Cosquer D."/>
            <person name="Vaudry H."/>
            <person name="Iwamuro S."/>
        </authorList>
    </citation>
    <scope>PROTEIN SEQUENCE</scope>
    <scope>FUNCTION</scope>
    <scope>MASS SPECTROMETRY</scope>
    <scope>DISULFIDE BOND</scope>
    <scope>SUBCELLULAR LOCATION</scope>
    <source>
        <tissue evidence="2">Skin</tissue>
    </source>
</reference>
<feature type="peptide" id="PRO_0000443441" description="Ranatuerin-2OK" evidence="1">
    <location>
        <begin position="1"/>
        <end position="30"/>
    </location>
</feature>
<feature type="disulfide bond" evidence="1">
    <location>
        <begin position="23"/>
        <end position="30"/>
    </location>
</feature>
<comment type="function">
    <text evidence="1">Antimicrobial peptide. Active against Gram-negative bacterium E.coli (MIC=12.5 uM) and against Gram-positive bacterium S.aureus (MIC=50 uM).</text>
</comment>
<comment type="subcellular location">
    <subcellularLocation>
        <location evidence="1">Secreted</location>
    </subcellularLocation>
</comment>
<comment type="tissue specificity">
    <text evidence="4">Expressed by the skin glands.</text>
</comment>
<comment type="mass spectrometry" mass="3183.7" method="MALDI" evidence="1"/>
<comment type="similarity">
    <text evidence="3">Belongs to the frog skin active peptide (FSAP) family. Ranatuerin subfamily.</text>
</comment>
<evidence type="ECO:0000269" key="1">
    <source>
    </source>
</evidence>
<evidence type="ECO:0000303" key="2">
    <source>
    </source>
</evidence>
<evidence type="ECO:0000305" key="3"/>
<evidence type="ECO:0000305" key="4">
    <source>
    </source>
</evidence>
<name>RN2_NIDOK</name>
<protein>
    <recommendedName>
        <fullName evidence="2">Ranatuerin-2OK</fullName>
    </recommendedName>
</protein>
<sequence length="30" mass="3188">SFLNFFKGAAKNLLAAGLDKLKCKISGTQC</sequence>
<accession>C0HL07</accession>
<dbReference type="SMR" id="C0HL07"/>
<dbReference type="GO" id="GO:0005576">
    <property type="term" value="C:extracellular region"/>
    <property type="evidence" value="ECO:0000314"/>
    <property type="project" value="UniProtKB"/>
</dbReference>
<dbReference type="GO" id="GO:0050829">
    <property type="term" value="P:defense response to Gram-negative bacterium"/>
    <property type="evidence" value="ECO:0000314"/>
    <property type="project" value="UniProtKB"/>
</dbReference>
<dbReference type="GO" id="GO:0050830">
    <property type="term" value="P:defense response to Gram-positive bacterium"/>
    <property type="evidence" value="ECO:0000314"/>
    <property type="project" value="UniProtKB"/>
</dbReference>
<dbReference type="GO" id="GO:0045087">
    <property type="term" value="P:innate immune response"/>
    <property type="evidence" value="ECO:0007669"/>
    <property type="project" value="UniProtKB-KW"/>
</dbReference>
<dbReference type="GO" id="GO:0031640">
    <property type="term" value="P:killing of cells of another organism"/>
    <property type="evidence" value="ECO:0000314"/>
    <property type="project" value="UniProtKB"/>
</dbReference>
<dbReference type="InterPro" id="IPR012521">
    <property type="entry name" value="Antimicrobial_frog_2"/>
</dbReference>
<dbReference type="Pfam" id="PF08023">
    <property type="entry name" value="Antimicrobial_2"/>
    <property type="match status" value="1"/>
</dbReference>